<keyword id="KW-0007">Acetylation</keyword>
<keyword id="KW-0103">Bromodomain</keyword>
<keyword id="KW-0156">Chromatin regulator</keyword>
<keyword id="KW-0238">DNA-binding</keyword>
<keyword id="KW-1017">Isopeptide bond</keyword>
<keyword id="KW-0479">Metal-binding</keyword>
<keyword id="KW-0489">Methyltransferase</keyword>
<keyword id="KW-0539">Nucleus</keyword>
<keyword id="KW-0597">Phosphoprotein</keyword>
<keyword id="KW-1185">Reference proteome</keyword>
<keyword id="KW-0677">Repeat</keyword>
<keyword id="KW-0949">S-adenosyl-L-methionine</keyword>
<keyword id="KW-0804">Transcription</keyword>
<keyword id="KW-0805">Transcription regulation</keyword>
<keyword id="KW-0808">Transferase</keyword>
<keyword id="KW-0832">Ubl conjugation</keyword>
<keyword id="KW-0862">Zinc</keyword>
<keyword id="KW-0863">Zinc-finger</keyword>
<comment type="function">
    <text evidence="2 12">Histone methyltransferase that catalyzes methyl group transfer from S-adenosyl-L-methionine to the epsilon-amino group of 'Lys-4' of histone H3 (H3K4) via a non-processive mechanism. Part of chromatin remodeling machinery predominantly forms H3K4me1 and H3K4me2 methylation marks at active chromatin sites where transcription and DNA repair take place (By similarity). Likely plays a redundant role with KMT2C in enriching H3K4me1 marks on primed and active enhancer elements (By similarity). Plays a central role in beta-globin locus transcription regulation by being recruited by NFE2 (By similarity). Plays an important role in controlling bulk H3K4me during oocyte growth and preimplantation development (PubMed:20808952). Required during the transcriptionally active period of oocyte growth for the establishment and/or maintenance of bulk H3K4 trimethylation (H3K4me3), global transcriptional silencing that preceeds resumption of meiosis, oocyte survival and normal zygotic genome activation (PubMed:20808952).</text>
</comment>
<comment type="catalytic activity">
    <reaction evidence="2">
        <text>L-lysyl(4)-[histone H3] + S-adenosyl-L-methionine = N(6)-methyl-L-lysyl(4)-[histone H3] + S-adenosyl-L-homocysteine + H(+)</text>
        <dbReference type="Rhea" id="RHEA:60264"/>
        <dbReference type="Rhea" id="RHEA-COMP:15543"/>
        <dbReference type="Rhea" id="RHEA-COMP:15547"/>
        <dbReference type="ChEBI" id="CHEBI:15378"/>
        <dbReference type="ChEBI" id="CHEBI:29969"/>
        <dbReference type="ChEBI" id="CHEBI:57856"/>
        <dbReference type="ChEBI" id="CHEBI:59789"/>
        <dbReference type="ChEBI" id="CHEBI:61929"/>
        <dbReference type="EC" id="2.1.1.364"/>
    </reaction>
    <physiologicalReaction direction="left-to-right" evidence="2">
        <dbReference type="Rhea" id="RHEA:60265"/>
    </physiologicalReaction>
</comment>
<comment type="catalytic activity">
    <reaction evidence="2">
        <text>N(6)-methyl-L-lysyl(4)-[histone H3] + S-adenosyl-L-methionine = N(6),N(6)-dimethyl-L-lysyl(4)-[histone H3] + S-adenosyl-L-homocysteine + H(+)</text>
        <dbReference type="Rhea" id="RHEA:60268"/>
        <dbReference type="Rhea" id="RHEA-COMP:15540"/>
        <dbReference type="Rhea" id="RHEA-COMP:15543"/>
        <dbReference type="ChEBI" id="CHEBI:15378"/>
        <dbReference type="ChEBI" id="CHEBI:57856"/>
        <dbReference type="ChEBI" id="CHEBI:59789"/>
        <dbReference type="ChEBI" id="CHEBI:61929"/>
        <dbReference type="ChEBI" id="CHEBI:61976"/>
    </reaction>
    <physiologicalReaction direction="left-to-right" evidence="2">
        <dbReference type="Rhea" id="RHEA:60269"/>
    </physiologicalReaction>
</comment>
<comment type="subunit">
    <text evidence="2">Component of the menin-associated histone methyltransferase complex, at least composed of KMT2B/MLL4, ASH2L, RBBP5, WDR5, DPY30, MEN1; the complex interacts with POLR2A and POLR2B via MEN1 (By similarity). Interacts with NFE2 (By similarity). Interacts with KDM6B (By similarity). Interacts (via WIN motif) with WDR5 (By similarity). Interacts (via MBM motif) with MEN1 (By similarity).</text>
</comment>
<comment type="subcellular location">
    <subcellularLocation>
        <location evidence="2">Nucleus</location>
    </subcellularLocation>
</comment>
<comment type="domain">
    <text evidence="2">The CXXC zinc finger mediates binding to DNA containing unmethylated cytidine-phosphate-guanosine (CpG) dinucleotides.</text>
</comment>
<comment type="disruption phenotype">
    <text evidence="12">Females are infertile due to anovulation and follicle loss. Oocytes show reduced H3K4me3 but not H3K4me1, abnormal expression of pro-apoptotic genes and Iap elements (which may contribute to oocyte death and, ultimately, follicle loss) and fail to establish transcriptional repression.</text>
</comment>
<comment type="similarity">
    <text evidence="6">Belongs to the class V-like SAM-binding methyltransferase superfamily. Histone-lysine methyltransferase family. TRX/MLL subfamily.</text>
</comment>
<comment type="caution">
    <text evidence="13">The human ortholog, KMT2B/MLL4, was first named MLL2 (see AC Q9UMN6). Thus, mouse Kmt2b/Mll4 is also often referred to as Mll2 and vice versa in the literature.</text>
</comment>
<comment type="sequence caution" evidence="13">
    <conflict type="miscellaneous discrepancy">
        <sequence resource="EMBL-CDS" id="AAC53192"/>
    </conflict>
    <text>Possible contaminating sequence. The N-terminal 3 residues and C-terminal 8 residues do not match the underlying genomic sequence.</text>
</comment>
<accession>O08550</accession>
<accession>E9QKF4</accession>
<accession>Q5NU09</accession>
<sequence length="2713" mass="294821">MAAAAGGGSCPGPGSARGRFPGRPRGSGGGGGRGGRGNGAERVRVALRRGGGAAGPGGAEPGEDTALLRLLGLRRGLRRLRRLWAGARVQRGRGRGRGRGWGPNRGCMPEEESSDGESEEEEFQGFHSDEDVAPSSLRSALRSQRGRAPRGRGRKHKTTPLPPRLADVTPVPPKAPTRKRGEEGTERMVQALTELLRRSQAPQPPRSRARAREPSTPRRSRGRPPGRPAGPCRKKQQAVVLAEAAVTIPKPEPPPPVVPVKNKAGSWKCKEGPGPGPGTPKRGGQPGRGGRGGRGRGRGGLPLMIKFVSKAKKVKMGQLSQELESGQGHGQRGESWQDAPQRKDGDEPERGSCRKKQEQKLEEEEEEEEKEGEEKEEKDDNEDNNKQEEEEETERAVAEEEAMLAKEKEEAKLPSPPLTPPVPSPPPPLPPPSTSPPPPASPLPPPVSPPPPLSPPPYPAPEKQEESPPLVPATCSRKRGRPPLTPSQRAEREAARSGPEGTLSPTPNPSTTTGSPLEDSPTVVPKSTTFLKNIRQFIMPVVSARSSRVIKTPRRFMDEDPPKPPKVEASIVRPPVATSPPAPQEPVPVSSPPRVPTPPSTPVPLPEKRRSILREPTFRWTSLTRELPPPPPAPPPAPSPPPAPATPSRRPLLLRAPQFTPSEAHLKIYESVLTPPPLGALETPEPELPPADDSPAEPEPRAVGRTNHLSLPRFVPVVTSPVKVEVPPHGAPALSEGQQLQLQQPPQALQTQLLPQALPPQQPQAQPPPSPQHTPPLEKARVASLGSLPLSGVEEKMFSLLKRAKVQLFKIDQQQQQKVAASMPLSPAVQTEEAVGTVKQTPDRGCVRSEDESMEAKRDRASGPESPLQGPRIKHVCRHAAVALGQARAMVPEDVPRLSALPLRDRQDLATEDTSSASETESVPSRSQREKVESAGPGGDSEPTGSTGALAHTPRRSLPSHHGKKMRMARCGHCRGCLRVQDCGSCVNCLDKPKFGGPNTKKQCCVYRKCDKIEARKMERLAKKGRTIVKTLLPWDSDESPEASPGPPGPRRGAGAGGSREEVGATPGPEEQDSLLLQRKSARRCVKQRPSYDVFEDSDDSEPGGPPAPRRRTPREHELPVLEPEEQSRPRKPTLQPVLQLKARRRLDKDALAPGPFASFPNGWTGKQKSPDGVHRVRVDFKEDCDLENVWLMGGLSVLTSVPGGPPMVCLLCASKGLHELVFCQVCCDPFHPFCLEEAERPSPQHRDTWCCRRCKFCHVCGRKGRGSKHLLECERCRHAYHPACLGPSYPTRATRRRRHWICSACVRCKSCGATPGKNWDVEWSGDYSLCPRCTELYEKGNYCPICTRCYEDNDYESKMMQCAQCDHWVHAKCEGLSDEDYEILSGLPDSVLYTCGPCAGATQPRWREALSGALQGGLRQVLQGLLSSKVAGPLLLCTQCGQDGKQLHPGPCDLQAVGKRFEEGLYKSVHSFMEDVVAILMRHSEEGETPERRAGSQMKGLLLKLLESAFCWFDAHDPKYWRRSTRLPNGVLPNAVLPPSLDHVYAQWRQQESETPESGQPPGDPSAAFQSKDPAAFSHLDDPRQCALCLKYGDADSKEAGRLLYIGQNEWTHVNCAIWSAEVFEENDGSLKNVHAAVARGRQMRCELCLKPGATVGCCLSSCLSNFHFMCARASYCIFQDDKKVFCQKHTDLLDGKEIVTPDGFDVLRRVYVDFEGINFKRKFLTGLEPDVINVLIGSIRINSLGTLSDLSDCEGRLFPIGYQCSRLYWSTVDARRRCWYRCRILEYRPWGPREEPVHLEAAEENQTIVHSPTPSSDTDSLIPGDPVHHSPIQNLDPPLRTDSSNGPPPTPRSFSGARIKVPNYSPSRRPLGGVSFGPLPSPGSPSSLTHHIPTVGDSDFPAPPRRSRRPSPLATRPPPSRRTSSPLRTSPQLRVPLSTSVTALTPTSGELAPPDLAPSPLPPSEDLGPDFEDMEVVSGLSAADLDFAASLLGTEPFQEEIVAAGAVGSSQGGPGDSSEEEASPTTHYVHFPVTVVSGPALAPSSLAGAPRIEQLDGVDDGTDSEAEAVQQPRGQGTPPSGPGVGRGGVLGAAGDRAQPPEDLPSEIVDFVLKNLGGPGEGAAGPREDSLPSAPPLANGSQPPQSLSTSPADPTRTFAWLPGAPGVRVLSLGPAPEPPKPATSKIILVNKLGQVFVKMAGEGEPVAPPVKQPPLPPIIPPTAPTSWTLPPGPLLSVLPVVGVGVVRPAPPPPPPPLTLVFSSGPPSPPRQAIRVKRVSTFSGRSPPVPPPNKTPRLDEDGESLEDAHHVPGISGSGFSRVRMKTPTVRGVLDLNNPGEQPEEESPGRPQDRCPLLPLAEAPSQALDGSSDLLFESQWHHYSAGEASSSEEEPPSPEDKENQVPKRVGPHLRFEISSDDGFSVEAESLEVAWRTLIEKVQEARGHARLRHLSFSGMSGARLLGIHHDAVIFLAEQLPGAQRCQHYKFRYHQQGEGQEEPPLNPHGAARAEVYLRKCTFDMFNFLASQHRVLPEGATCDEEEDEVQLRSTRRATSLELPMAMRFRHLKKTSKEAVGVYRSAIHGRGLFCKRNIDAGEMVIEYSGIVIRSVLTDKREKFYDGKGIGCYMFRMDDFDVVDATMHGNAARFINHSCEPNCFSRVIHVEGQKHIVIFALRRILRGEELTYDYKFPIEDASNKLPCNCGAKRCRRFLN</sequence>
<proteinExistence type="evidence at protein level"/>
<protein>
    <recommendedName>
        <fullName>Histone-lysine N-methyltransferase 2B</fullName>
        <shortName>Lysine N-methyltransferase 2B</shortName>
        <ecNumber evidence="2">2.1.1.364</ecNumber>
    </recommendedName>
    <alternativeName>
        <fullName>Myeloid/lymphoid or mixed-lineage leukemia protein 4 homolog</fullName>
    </alternativeName>
    <alternativeName>
        <fullName>Trithorax homolog 2</fullName>
    </alternativeName>
    <alternativeName>
        <fullName>WW domain-binding protein 7</fullName>
        <shortName>WBP-7</shortName>
    </alternativeName>
</protein>
<feature type="initiator methionine" description="Removed" evidence="2">
    <location>
        <position position="1"/>
    </location>
</feature>
<feature type="chain" id="PRO_0000124882" description="Histone-lysine N-methyltransferase 2B">
    <location>
        <begin position="2"/>
        <end position="2713"/>
    </location>
</feature>
<feature type="domain" description="Bromo" evidence="3">
    <location>
        <begin position="1410"/>
        <end position="1510"/>
    </location>
</feature>
<feature type="domain" description="FYR N-terminal" evidence="8">
    <location>
        <begin position="1733"/>
        <end position="1789"/>
    </location>
</feature>
<feature type="domain" description="FYR C-terminal" evidence="9">
    <location>
        <begin position="2409"/>
        <end position="2490"/>
    </location>
</feature>
<feature type="domain" description="SET" evidence="6">
    <location>
        <begin position="2573"/>
        <end position="2689"/>
    </location>
</feature>
<feature type="domain" description="Post-SET" evidence="5">
    <location>
        <begin position="2697"/>
        <end position="2713"/>
    </location>
</feature>
<feature type="DNA-binding region" description="A.T hook 1">
    <location>
        <begin position="37"/>
        <end position="44"/>
    </location>
</feature>
<feature type="DNA-binding region" description="A.T hook 2">
    <location>
        <begin position="110"/>
        <end position="117"/>
    </location>
</feature>
<feature type="DNA-binding region" description="A.T hook 3">
    <location>
        <begin position="357"/>
        <end position="365"/>
    </location>
</feature>
<feature type="zinc finger region" description="CXXC-type" evidence="7">
    <location>
        <begin position="964"/>
        <end position="1011"/>
    </location>
</feature>
<feature type="zinc finger region" description="PHD-type 1" evidence="4">
    <location>
        <begin position="1207"/>
        <end position="1258"/>
    </location>
</feature>
<feature type="zinc finger region" description="PHD-type 2" evidence="4">
    <location>
        <begin position="1255"/>
        <end position="1309"/>
    </location>
</feature>
<feature type="zinc finger region" description="PHD-type 3" evidence="4">
    <location>
        <begin position="1341"/>
        <end position="1402"/>
    </location>
</feature>
<feature type="zinc finger region" description="C2HC pre-PHD-type" evidence="10">
    <location>
        <begin position="1584"/>
        <end position="1624"/>
    </location>
</feature>
<feature type="zinc finger region" description="PHD-type 4" evidence="10">
    <location>
        <begin position="1645"/>
        <end position="1692"/>
    </location>
</feature>
<feature type="region of interest" description="Disordered" evidence="11">
    <location>
        <begin position="1"/>
        <end position="65"/>
    </location>
</feature>
<feature type="region of interest" description="Disordered" evidence="11">
    <location>
        <begin position="82"/>
        <end position="524"/>
    </location>
</feature>
<feature type="region of interest" description="Disordered" evidence="11">
    <location>
        <begin position="542"/>
        <end position="783"/>
    </location>
</feature>
<feature type="region of interest" description="Disordered" evidence="11">
    <location>
        <begin position="831"/>
        <end position="872"/>
    </location>
</feature>
<feature type="region of interest" description="Disordered" evidence="11">
    <location>
        <begin position="899"/>
        <end position="964"/>
    </location>
</feature>
<feature type="region of interest" description="Disordered" evidence="11">
    <location>
        <begin position="1032"/>
        <end position="1076"/>
    </location>
</feature>
<feature type="region of interest" description="Disordered" evidence="11">
    <location>
        <begin position="1088"/>
        <end position="1138"/>
    </location>
</feature>
<feature type="region of interest" description="Disordered" evidence="11">
    <location>
        <begin position="1550"/>
        <end position="1572"/>
    </location>
</feature>
<feature type="region of interest" description="Disordered" evidence="11">
    <location>
        <begin position="1808"/>
        <end position="1973"/>
    </location>
</feature>
<feature type="region of interest" description="Disordered" evidence="11">
    <location>
        <begin position="2056"/>
        <end position="2104"/>
    </location>
</feature>
<feature type="region of interest" description="Disordered" evidence="11">
    <location>
        <begin position="2116"/>
        <end position="2160"/>
    </location>
</feature>
<feature type="region of interest" description="Disordered" evidence="11">
    <location>
        <begin position="2279"/>
        <end position="2356"/>
    </location>
</feature>
<feature type="region of interest" description="Disordered" evidence="11">
    <location>
        <begin position="2382"/>
        <end position="2408"/>
    </location>
</feature>
<feature type="short sequence motif" description="Menin-binding motif (MBM)" evidence="2">
    <location>
        <begin position="17"/>
        <end position="36"/>
    </location>
</feature>
<feature type="short sequence motif" description="WDR5 interaction motif (WIN)" evidence="2">
    <location>
        <begin position="2506"/>
        <end position="2511"/>
    </location>
</feature>
<feature type="compositionally biased region" description="Gly residues" evidence="11">
    <location>
        <begin position="1"/>
        <end position="11"/>
    </location>
</feature>
<feature type="compositionally biased region" description="Low complexity" evidence="11">
    <location>
        <begin position="12"/>
        <end position="24"/>
    </location>
</feature>
<feature type="compositionally biased region" description="Gly residues" evidence="11">
    <location>
        <begin position="25"/>
        <end position="38"/>
    </location>
</feature>
<feature type="compositionally biased region" description="Gly residues" evidence="11">
    <location>
        <begin position="49"/>
        <end position="60"/>
    </location>
</feature>
<feature type="compositionally biased region" description="Acidic residues" evidence="11">
    <location>
        <begin position="109"/>
        <end position="123"/>
    </location>
</feature>
<feature type="compositionally biased region" description="Basic residues" evidence="11">
    <location>
        <begin position="144"/>
        <end position="158"/>
    </location>
</feature>
<feature type="compositionally biased region" description="Basic and acidic residues" evidence="11">
    <location>
        <begin position="340"/>
        <end position="360"/>
    </location>
</feature>
<feature type="compositionally biased region" description="Acidic residues" evidence="11">
    <location>
        <begin position="361"/>
        <end position="393"/>
    </location>
</feature>
<feature type="compositionally biased region" description="Basic and acidic residues" evidence="11">
    <location>
        <begin position="394"/>
        <end position="412"/>
    </location>
</feature>
<feature type="compositionally biased region" description="Pro residues" evidence="11">
    <location>
        <begin position="414"/>
        <end position="460"/>
    </location>
</feature>
<feature type="compositionally biased region" description="Low complexity" evidence="11">
    <location>
        <begin position="501"/>
        <end position="517"/>
    </location>
</feature>
<feature type="compositionally biased region" description="Basic and acidic residues" evidence="11">
    <location>
        <begin position="555"/>
        <end position="566"/>
    </location>
</feature>
<feature type="compositionally biased region" description="Pro residues" evidence="11">
    <location>
        <begin position="577"/>
        <end position="605"/>
    </location>
</feature>
<feature type="compositionally biased region" description="Basic and acidic residues" evidence="11">
    <location>
        <begin position="606"/>
        <end position="617"/>
    </location>
</feature>
<feature type="compositionally biased region" description="Pro residues" evidence="11">
    <location>
        <begin position="627"/>
        <end position="645"/>
    </location>
</feature>
<feature type="compositionally biased region" description="Low complexity" evidence="11">
    <location>
        <begin position="646"/>
        <end position="657"/>
    </location>
</feature>
<feature type="compositionally biased region" description="Low complexity" evidence="11">
    <location>
        <begin position="715"/>
        <end position="728"/>
    </location>
</feature>
<feature type="compositionally biased region" description="Low complexity" evidence="11">
    <location>
        <begin position="738"/>
        <end position="756"/>
    </location>
</feature>
<feature type="compositionally biased region" description="Pro residues" evidence="11">
    <location>
        <begin position="757"/>
        <end position="774"/>
    </location>
</feature>
<feature type="compositionally biased region" description="Basic and acidic residues" evidence="11">
    <location>
        <begin position="841"/>
        <end position="862"/>
    </location>
</feature>
<feature type="compositionally biased region" description="Low complexity" evidence="11">
    <location>
        <begin position="912"/>
        <end position="922"/>
    </location>
</feature>
<feature type="compositionally biased region" description="Basic residues" evidence="11">
    <location>
        <begin position="953"/>
        <end position="964"/>
    </location>
</feature>
<feature type="compositionally biased region" description="Polar residues" evidence="11">
    <location>
        <begin position="1808"/>
        <end position="1821"/>
    </location>
</feature>
<feature type="compositionally biased region" description="Low complexity" evidence="11">
    <location>
        <begin position="1872"/>
        <end position="1890"/>
    </location>
</feature>
<feature type="compositionally biased region" description="Low complexity" evidence="11">
    <location>
        <begin position="1923"/>
        <end position="1933"/>
    </location>
</feature>
<feature type="compositionally biased region" description="Polar residues" evidence="11">
    <location>
        <begin position="1939"/>
        <end position="1950"/>
    </location>
</feature>
<feature type="compositionally biased region" description="Acidic residues" evidence="11">
    <location>
        <begin position="2058"/>
        <end position="2068"/>
    </location>
</feature>
<feature type="compositionally biased region" description="Gly residues" evidence="11">
    <location>
        <begin position="2084"/>
        <end position="2093"/>
    </location>
</feature>
<feature type="compositionally biased region" description="Polar residues" evidence="11">
    <location>
        <begin position="2140"/>
        <end position="2153"/>
    </location>
</feature>
<feature type="binding site" evidence="7">
    <location>
        <position position="971"/>
    </location>
    <ligand>
        <name>Zn(2+)</name>
        <dbReference type="ChEBI" id="CHEBI:29105"/>
        <label>1</label>
    </ligand>
</feature>
<feature type="binding site" evidence="7">
    <location>
        <position position="974"/>
    </location>
    <ligand>
        <name>Zn(2+)</name>
        <dbReference type="ChEBI" id="CHEBI:29105"/>
        <label>1</label>
    </ligand>
</feature>
<feature type="binding site" evidence="7">
    <location>
        <position position="977"/>
    </location>
    <ligand>
        <name>Zn(2+)</name>
        <dbReference type="ChEBI" id="CHEBI:29105"/>
        <label>1</label>
    </ligand>
</feature>
<feature type="binding site" evidence="7">
    <location>
        <position position="983"/>
    </location>
    <ligand>
        <name>Zn(2+)</name>
        <dbReference type="ChEBI" id="CHEBI:29105"/>
        <label>2</label>
    </ligand>
</feature>
<feature type="binding site" evidence="7">
    <location>
        <position position="986"/>
    </location>
    <ligand>
        <name>Zn(2+)</name>
        <dbReference type="ChEBI" id="CHEBI:29105"/>
        <label>2</label>
    </ligand>
</feature>
<feature type="binding site" evidence="7">
    <location>
        <position position="989"/>
    </location>
    <ligand>
        <name>Zn(2+)</name>
        <dbReference type="ChEBI" id="CHEBI:29105"/>
        <label>2</label>
    </ligand>
</feature>
<feature type="binding site" evidence="7">
    <location>
        <position position="1005"/>
    </location>
    <ligand>
        <name>Zn(2+)</name>
        <dbReference type="ChEBI" id="CHEBI:29105"/>
        <label>2</label>
    </ligand>
</feature>
<feature type="binding site" evidence="7">
    <location>
        <position position="1010"/>
    </location>
    <ligand>
        <name>Zn(2+)</name>
        <dbReference type="ChEBI" id="CHEBI:29105"/>
        <label>1</label>
    </ligand>
</feature>
<feature type="binding site" evidence="6">
    <location>
        <position position="2583"/>
    </location>
    <ligand>
        <name>S-adenosyl-L-methionine</name>
        <dbReference type="ChEBI" id="CHEBI:59789"/>
    </ligand>
</feature>
<feature type="binding site" evidence="6">
    <location>
        <position position="2585"/>
    </location>
    <ligand>
        <name>S-adenosyl-L-methionine</name>
        <dbReference type="ChEBI" id="CHEBI:59789"/>
    </ligand>
</feature>
<feature type="binding site" evidence="6">
    <location>
        <position position="2627"/>
    </location>
    <ligand>
        <name>S-adenosyl-L-methionine</name>
        <dbReference type="ChEBI" id="CHEBI:59789"/>
    </ligand>
</feature>
<feature type="binding site" evidence="1">
    <location>
        <begin position="2650"/>
        <end position="2651"/>
    </location>
    <ligand>
        <name>S-adenosyl-L-methionine</name>
        <dbReference type="ChEBI" id="CHEBI:59789"/>
    </ligand>
</feature>
<feature type="binding site" evidence="1">
    <location>
        <position position="2653"/>
    </location>
    <ligand>
        <name>Zn(2+)</name>
        <dbReference type="ChEBI" id="CHEBI:29105"/>
    </ligand>
</feature>
<feature type="binding site" evidence="1">
    <location>
        <position position="2701"/>
    </location>
    <ligand>
        <name>Zn(2+)</name>
        <dbReference type="ChEBI" id="CHEBI:29105"/>
    </ligand>
</feature>
<feature type="binding site" evidence="6">
    <location>
        <position position="2702"/>
    </location>
    <ligand>
        <name>S-adenosyl-L-methionine</name>
        <dbReference type="ChEBI" id="CHEBI:59789"/>
    </ligand>
</feature>
<feature type="binding site" evidence="1">
    <location>
        <position position="2703"/>
    </location>
    <ligand>
        <name>Zn(2+)</name>
        <dbReference type="ChEBI" id="CHEBI:29105"/>
    </ligand>
</feature>
<feature type="binding site" evidence="1">
    <location>
        <position position="2708"/>
    </location>
    <ligand>
        <name>Zn(2+)</name>
        <dbReference type="ChEBI" id="CHEBI:29105"/>
    </ligand>
</feature>
<feature type="modified residue" description="N-acetylalanine" evidence="2">
    <location>
        <position position="2"/>
    </location>
</feature>
<feature type="modified residue" description="Phosphoserine" evidence="14">
    <location>
        <position position="113"/>
    </location>
</feature>
<feature type="modified residue" description="Phosphoserine" evidence="14">
    <location>
        <position position="114"/>
    </location>
</feature>
<feature type="modified residue" description="Phosphoserine" evidence="14">
    <location>
        <position position="118"/>
    </location>
</feature>
<feature type="modified residue" description="Phosphoserine" evidence="2">
    <location>
        <position position="826"/>
    </location>
</feature>
<feature type="modified residue" description="Phosphoserine" evidence="2">
    <location>
        <position position="849"/>
    </location>
</feature>
<feature type="modified residue" description="Phosphoserine" evidence="2">
    <location>
        <position position="866"/>
    </location>
</feature>
<feature type="modified residue" description="Phosphoserine" evidence="2">
    <location>
        <position position="941"/>
    </location>
</feature>
<feature type="modified residue" description="Phosphoserine" evidence="14">
    <location>
        <position position="1037"/>
    </location>
</feature>
<feature type="modified residue" description="Phosphoserine" evidence="14">
    <location>
        <position position="1040"/>
    </location>
</feature>
<feature type="modified residue" description="Phosphoserine" evidence="14">
    <location>
        <position position="1098"/>
    </location>
</feature>
<feature type="modified residue" description="Phosphoserine" evidence="14">
    <location>
        <position position="1101"/>
    </location>
</feature>
<feature type="modified residue" description="Phosphoserine" evidence="2">
    <location>
        <position position="1926"/>
    </location>
</feature>
<feature type="modified residue" description="Phosphoserine" evidence="2">
    <location>
        <position position="1932"/>
    </location>
</feature>
<feature type="modified residue" description="Phosphothreonine" evidence="14">
    <location>
        <position position="2064"/>
    </location>
</feature>
<feature type="modified residue" description="Phosphothreonine" evidence="2">
    <location>
        <position position="2079"/>
    </location>
</feature>
<feature type="modified residue" description="Phosphoserine" evidence="2">
    <location>
        <position position="2286"/>
    </location>
</feature>
<feature type="modified residue" description="Phosphoserine" evidence="14">
    <location>
        <position position="2346"/>
    </location>
</feature>
<feature type="cross-link" description="Glycyl lysine isopeptide (Lys-Gly) (interchain with G-Cter in SUMO2)" evidence="2">
    <location>
        <position position="810"/>
    </location>
</feature>
<feature type="cross-link" description="Glycyl lysine isopeptide (Lys-Gly) (interchain with G-Cter in SUMO2)" evidence="2">
    <location>
        <position position="1142"/>
    </location>
</feature>
<feature type="sequence conflict" description="In Ref. 1; BAD81031." evidence="13" ref="1">
    <original>G</original>
    <variation>V</variation>
    <location>
        <position position="18"/>
    </location>
</feature>
<feature type="sequence conflict" description="In Ref. 1; BAD81031." evidence="13" ref="1">
    <original>RGS</original>
    <variation>LGC</variation>
    <location>
        <begin position="25"/>
        <end position="27"/>
    </location>
</feature>
<gene>
    <name type="primary">Kmt2b</name>
    <name type="synonym">Mll2</name>
    <name type="synonym">Trx2</name>
    <name type="synonym">Wbp7</name>
</gene>
<name>KMT2B_MOUSE</name>
<evidence type="ECO:0000250" key="1">
    <source>
        <dbReference type="UniProtKB" id="Q03164"/>
    </source>
</evidence>
<evidence type="ECO:0000250" key="2">
    <source>
        <dbReference type="UniProtKB" id="Q9UMN6"/>
    </source>
</evidence>
<evidence type="ECO:0000255" key="3">
    <source>
        <dbReference type="PROSITE-ProRule" id="PRU00035"/>
    </source>
</evidence>
<evidence type="ECO:0000255" key="4">
    <source>
        <dbReference type="PROSITE-ProRule" id="PRU00146"/>
    </source>
</evidence>
<evidence type="ECO:0000255" key="5">
    <source>
        <dbReference type="PROSITE-ProRule" id="PRU00155"/>
    </source>
</evidence>
<evidence type="ECO:0000255" key="6">
    <source>
        <dbReference type="PROSITE-ProRule" id="PRU00190"/>
    </source>
</evidence>
<evidence type="ECO:0000255" key="7">
    <source>
        <dbReference type="PROSITE-ProRule" id="PRU00509"/>
    </source>
</evidence>
<evidence type="ECO:0000255" key="8">
    <source>
        <dbReference type="PROSITE-ProRule" id="PRU00875"/>
    </source>
</evidence>
<evidence type="ECO:0000255" key="9">
    <source>
        <dbReference type="PROSITE-ProRule" id="PRU00876"/>
    </source>
</evidence>
<evidence type="ECO:0000255" key="10">
    <source>
        <dbReference type="PROSITE-ProRule" id="PRU01146"/>
    </source>
</evidence>
<evidence type="ECO:0000256" key="11">
    <source>
        <dbReference type="SAM" id="MobiDB-lite"/>
    </source>
</evidence>
<evidence type="ECO:0000269" key="12">
    <source>
    </source>
</evidence>
<evidence type="ECO:0000305" key="13"/>
<evidence type="ECO:0007744" key="14">
    <source>
    </source>
</evidence>
<organism>
    <name type="scientific">Mus musculus</name>
    <name type="common">Mouse</name>
    <dbReference type="NCBI Taxonomy" id="10090"/>
    <lineage>
        <taxon>Eukaryota</taxon>
        <taxon>Metazoa</taxon>
        <taxon>Chordata</taxon>
        <taxon>Craniata</taxon>
        <taxon>Vertebrata</taxon>
        <taxon>Euteleostomi</taxon>
        <taxon>Mammalia</taxon>
        <taxon>Eutheria</taxon>
        <taxon>Euarchontoglires</taxon>
        <taxon>Glires</taxon>
        <taxon>Rodentia</taxon>
        <taxon>Myomorpha</taxon>
        <taxon>Muroidea</taxon>
        <taxon>Muridae</taxon>
        <taxon>Murinae</taxon>
        <taxon>Mus</taxon>
        <taxon>Mus</taxon>
    </lineage>
</organism>
<reference key="1">
    <citation type="submission" date="2004-06" db="EMBL/GenBank/DDBJ databases">
        <title>Murine MLL2 gene and its expression.</title>
        <authorList>
            <person name="Yoshida K."/>
        </authorList>
    </citation>
    <scope>NUCLEOTIDE SEQUENCE [MRNA]</scope>
</reference>
<reference key="2">
    <citation type="journal article" date="2009" name="PLoS Biol.">
        <title>Lineage-specific biology revealed by a finished genome assembly of the mouse.</title>
        <authorList>
            <person name="Church D.M."/>
            <person name="Goodstadt L."/>
            <person name="Hillier L.W."/>
            <person name="Zody M.C."/>
            <person name="Goldstein S."/>
            <person name="She X."/>
            <person name="Bult C.J."/>
            <person name="Agarwala R."/>
            <person name="Cherry J.L."/>
            <person name="DiCuccio M."/>
            <person name="Hlavina W."/>
            <person name="Kapustin Y."/>
            <person name="Meric P."/>
            <person name="Maglott D."/>
            <person name="Birtle Z."/>
            <person name="Marques A.C."/>
            <person name="Graves T."/>
            <person name="Zhou S."/>
            <person name="Teague B."/>
            <person name="Potamousis K."/>
            <person name="Churas C."/>
            <person name="Place M."/>
            <person name="Herschleb J."/>
            <person name="Runnheim R."/>
            <person name="Forrest D."/>
            <person name="Amos-Landgraf J."/>
            <person name="Schwartz D.C."/>
            <person name="Cheng Z."/>
            <person name="Lindblad-Toh K."/>
            <person name="Eichler E.E."/>
            <person name="Ponting C.P."/>
        </authorList>
    </citation>
    <scope>NUCLEOTIDE SEQUENCE [LARGE SCALE GENOMIC DNA]</scope>
    <source>
        <strain>C57BL/6J</strain>
    </source>
</reference>
<reference key="3">
    <citation type="journal article" date="1997" name="EMBO J.">
        <title>FBP WW domains and the Abl SH3 domain bind to a specific class of proline-rich ligands.</title>
        <authorList>
            <person name="Bedford M.T."/>
            <person name="Chan D.C."/>
            <person name="Leder P."/>
        </authorList>
    </citation>
    <scope>NUCLEOTIDE SEQUENCE [MRNA] OF 379-657</scope>
</reference>
<reference key="4">
    <citation type="journal article" date="2007" name="Proc. Natl. Acad. Sci. U.S.A.">
        <title>Large-scale phosphorylation analysis of mouse liver.</title>
        <authorList>
            <person name="Villen J."/>
            <person name="Beausoleil S.A."/>
            <person name="Gerber S.A."/>
            <person name="Gygi S.P."/>
        </authorList>
    </citation>
    <scope>IDENTIFICATION BY MASS SPECTROMETRY [LARGE SCALE ANALYSIS]</scope>
    <source>
        <tissue>Liver</tissue>
    </source>
</reference>
<reference key="5">
    <citation type="journal article" date="2010" name="Cell">
        <title>A tissue-specific atlas of mouse protein phosphorylation and expression.</title>
        <authorList>
            <person name="Huttlin E.L."/>
            <person name="Jedrychowski M.P."/>
            <person name="Elias J.E."/>
            <person name="Goswami T."/>
            <person name="Rad R."/>
            <person name="Beausoleil S.A."/>
            <person name="Villen J."/>
            <person name="Haas W."/>
            <person name="Sowa M.E."/>
            <person name="Gygi S.P."/>
        </authorList>
    </citation>
    <scope>PHOSPHORYLATION [LARGE SCALE ANALYSIS] AT SER-113; SER-114; SER-118; SER-1037; SER-1040; SER-1098; SER-1101; THR-2064 AND SER-2346</scope>
    <scope>IDENTIFICATION BY MASS SPECTROMETRY [LARGE SCALE ANALYSIS]</scope>
    <source>
        <tissue>Brain</tissue>
        <tissue>Kidney</tissue>
        <tissue>Lung</tissue>
        <tissue>Spleen</tissue>
        <tissue>Testis</tissue>
    </source>
</reference>
<reference key="6">
    <citation type="journal article" date="2010" name="PLoS Biol.">
        <title>MLL2 is required in oocytes for bulk histone 3 lysine 4 trimethylation and transcriptional silencing.</title>
        <authorList>
            <person name="Andreu-Vieyra C.V."/>
            <person name="Chen R."/>
            <person name="Agno J.E."/>
            <person name="Glaser S."/>
            <person name="Anastassiadis K."/>
            <person name="Stewart A.F."/>
            <person name="Matzuk M.M."/>
        </authorList>
    </citation>
    <scope>FUNCTION</scope>
    <scope>DISRUPTION PHENOTYPE</scope>
</reference>
<dbReference type="EC" id="2.1.1.364" evidence="2"/>
<dbReference type="EMBL" id="AB182318">
    <property type="protein sequence ID" value="BAD81031.1"/>
    <property type="molecule type" value="mRNA"/>
</dbReference>
<dbReference type="EMBL" id="AC167970">
    <property type="status" value="NOT_ANNOTATED_CDS"/>
    <property type="molecule type" value="Genomic_DNA"/>
</dbReference>
<dbReference type="EMBL" id="U92455">
    <property type="protein sequence ID" value="AAC53192.1"/>
    <property type="status" value="ALT_SEQ"/>
    <property type="molecule type" value="mRNA"/>
</dbReference>
<dbReference type="CCDS" id="CCDS21101.1"/>
<dbReference type="RefSeq" id="NP_083550.2">
    <property type="nucleotide sequence ID" value="NM_029274.2"/>
</dbReference>
<dbReference type="SMR" id="O08550"/>
<dbReference type="BioGRID" id="217461">
    <property type="interactions" value="19"/>
</dbReference>
<dbReference type="CORUM" id="O08550"/>
<dbReference type="FunCoup" id="O08550">
    <property type="interactions" value="3215"/>
</dbReference>
<dbReference type="IntAct" id="O08550">
    <property type="interactions" value="1"/>
</dbReference>
<dbReference type="MINT" id="O08550"/>
<dbReference type="STRING" id="10090.ENSMUSP00000103789"/>
<dbReference type="GlyGen" id="O08550">
    <property type="glycosylation" value="7 sites, 1 O-linked glycan (1 site)"/>
</dbReference>
<dbReference type="iPTMnet" id="O08550"/>
<dbReference type="PhosphoSitePlus" id="O08550"/>
<dbReference type="jPOST" id="O08550"/>
<dbReference type="PaxDb" id="10090-ENSMUSP00000103789"/>
<dbReference type="ProteomicsDB" id="264786"/>
<dbReference type="Pumba" id="O08550"/>
<dbReference type="Antibodypedia" id="70148">
    <property type="antibodies" value="189 antibodies from 33 providers"/>
</dbReference>
<dbReference type="DNASU" id="75410"/>
<dbReference type="Ensembl" id="ENSMUST00000108154.9">
    <property type="protein sequence ID" value="ENSMUSP00000103789.3"/>
    <property type="gene ID" value="ENSMUSG00000006307.17"/>
</dbReference>
<dbReference type="GeneID" id="75410"/>
<dbReference type="KEGG" id="mmu:75410"/>
<dbReference type="UCSC" id="uc009gfg.1">
    <property type="organism name" value="mouse"/>
</dbReference>
<dbReference type="AGR" id="MGI:109565"/>
<dbReference type="CTD" id="9757"/>
<dbReference type="MGI" id="MGI:109565">
    <property type="gene designation" value="Kmt2b"/>
</dbReference>
<dbReference type="VEuPathDB" id="HostDB:ENSMUSG00000006307"/>
<dbReference type="eggNOG" id="KOG1084">
    <property type="taxonomic scope" value="Eukaryota"/>
</dbReference>
<dbReference type="GeneTree" id="ENSGT00940000161496"/>
<dbReference type="InParanoid" id="O08550"/>
<dbReference type="OrthoDB" id="308383at2759"/>
<dbReference type="TreeFam" id="TF319820"/>
<dbReference type="Reactome" id="R-MMU-3214841">
    <property type="pathway name" value="PKMTs methylate histone lysines"/>
</dbReference>
<dbReference type="Reactome" id="R-MMU-8936459">
    <property type="pathway name" value="RUNX1 regulates genes involved in megakaryocyte differentiation and platelet function"/>
</dbReference>
<dbReference type="Reactome" id="R-MMU-9772755">
    <property type="pathway name" value="Formation of WDR5-containing histone-modifying complexes"/>
</dbReference>
<dbReference type="BioGRID-ORCS" id="75410">
    <property type="hits" value="8 hits in 80 CRISPR screens"/>
</dbReference>
<dbReference type="ChiTaRS" id="Kmt2b">
    <property type="organism name" value="mouse"/>
</dbReference>
<dbReference type="PRO" id="PR:O08550"/>
<dbReference type="Proteomes" id="UP000000589">
    <property type="component" value="Chromosome 7"/>
</dbReference>
<dbReference type="RNAct" id="O08550">
    <property type="molecule type" value="protein"/>
</dbReference>
<dbReference type="Bgee" id="ENSMUSG00000006307">
    <property type="expression patterns" value="Expressed in secondary oocyte and 228 other cell types or tissues"/>
</dbReference>
<dbReference type="ExpressionAtlas" id="O08550">
    <property type="expression patterns" value="baseline and differential"/>
</dbReference>
<dbReference type="GO" id="GO:0005829">
    <property type="term" value="C:cytosol"/>
    <property type="evidence" value="ECO:0000304"/>
    <property type="project" value="Reactome"/>
</dbReference>
<dbReference type="GO" id="GO:0035097">
    <property type="term" value="C:histone methyltransferase complex"/>
    <property type="evidence" value="ECO:0000266"/>
    <property type="project" value="MGI"/>
</dbReference>
<dbReference type="GO" id="GO:0005634">
    <property type="term" value="C:nucleus"/>
    <property type="evidence" value="ECO:0000266"/>
    <property type="project" value="MGI"/>
</dbReference>
<dbReference type="GO" id="GO:0042800">
    <property type="term" value="F:histone H3K4 methyltransferase activity"/>
    <property type="evidence" value="ECO:0000314"/>
    <property type="project" value="MGI"/>
</dbReference>
<dbReference type="GO" id="GO:0140945">
    <property type="term" value="F:histone H3K4 monomethyltransferase activity"/>
    <property type="evidence" value="ECO:0007669"/>
    <property type="project" value="RHEA"/>
</dbReference>
<dbReference type="GO" id="GO:0140999">
    <property type="term" value="F:histone H3K4 trimethyltransferase activity"/>
    <property type="evidence" value="ECO:0007669"/>
    <property type="project" value="UniProtKB-EC"/>
</dbReference>
<dbReference type="GO" id="GO:0045322">
    <property type="term" value="F:unmethylated CpG binding"/>
    <property type="evidence" value="ECO:0000250"/>
    <property type="project" value="UniProtKB"/>
</dbReference>
<dbReference type="GO" id="GO:0008270">
    <property type="term" value="F:zinc ion binding"/>
    <property type="evidence" value="ECO:0000250"/>
    <property type="project" value="UniProtKB"/>
</dbReference>
<dbReference type="GO" id="GO:0006346">
    <property type="term" value="P:DNA methylation-dependent constitutive heterochromatin formation"/>
    <property type="evidence" value="ECO:0000315"/>
    <property type="project" value="MGI"/>
</dbReference>
<dbReference type="GO" id="GO:0160021">
    <property type="term" value="P:maternal-to-zygotic transition of gene expression"/>
    <property type="evidence" value="ECO:0000315"/>
    <property type="project" value="MGI"/>
</dbReference>
<dbReference type="GO" id="GO:0032259">
    <property type="term" value="P:methylation"/>
    <property type="evidence" value="ECO:0007669"/>
    <property type="project" value="UniProtKB-KW"/>
</dbReference>
<dbReference type="GO" id="GO:0048599">
    <property type="term" value="P:oocyte development"/>
    <property type="evidence" value="ECO:0000315"/>
    <property type="project" value="MGI"/>
</dbReference>
<dbReference type="GO" id="GO:0001541">
    <property type="term" value="P:ovarian follicle development"/>
    <property type="evidence" value="ECO:0000315"/>
    <property type="project" value="MGI"/>
</dbReference>
<dbReference type="GO" id="GO:0030728">
    <property type="term" value="P:ovulation"/>
    <property type="evidence" value="ECO:0000315"/>
    <property type="project" value="MGI"/>
</dbReference>
<dbReference type="GO" id="GO:0006355">
    <property type="term" value="P:regulation of DNA-templated transcription"/>
    <property type="evidence" value="ECO:0007669"/>
    <property type="project" value="InterPro"/>
</dbReference>
<dbReference type="CDD" id="cd05493">
    <property type="entry name" value="Bromo_ALL-1"/>
    <property type="match status" value="1"/>
</dbReference>
<dbReference type="CDD" id="cd15694">
    <property type="entry name" value="ePHD_KMT2B"/>
    <property type="match status" value="1"/>
</dbReference>
<dbReference type="CDD" id="cd15589">
    <property type="entry name" value="PHD1_KMT2B"/>
    <property type="match status" value="1"/>
</dbReference>
<dbReference type="CDD" id="cd15591">
    <property type="entry name" value="PHD2_KMT2B"/>
    <property type="match status" value="1"/>
</dbReference>
<dbReference type="CDD" id="cd15593">
    <property type="entry name" value="PHD3_KMT2B"/>
    <property type="match status" value="1"/>
</dbReference>
<dbReference type="CDD" id="cd19170">
    <property type="entry name" value="SET_KMT2A_2B"/>
    <property type="match status" value="1"/>
</dbReference>
<dbReference type="FunFam" id="1.20.920.10:FF:000033">
    <property type="entry name" value="Histone-lysine N-methyltransferase"/>
    <property type="match status" value="1"/>
</dbReference>
<dbReference type="FunFam" id="2.170.270.10:FF:000004">
    <property type="entry name" value="Histone-lysine N-methyltransferase"/>
    <property type="match status" value="1"/>
</dbReference>
<dbReference type="FunFam" id="3.30.160.360:FF:000004">
    <property type="entry name" value="Histone-lysine N-methyltransferase"/>
    <property type="match status" value="1"/>
</dbReference>
<dbReference type="FunFam" id="3.30.160.360:FF:000006">
    <property type="entry name" value="Histone-lysine N-methyltransferase"/>
    <property type="match status" value="1"/>
</dbReference>
<dbReference type="FunFam" id="3.30.40.10:FF:000002">
    <property type="entry name" value="Histone-lysine N-methyltransferase"/>
    <property type="match status" value="1"/>
</dbReference>
<dbReference type="FunFam" id="3.30.40.10:FF:000071">
    <property type="entry name" value="Histone-lysine N-methyltransferase"/>
    <property type="match status" value="1"/>
</dbReference>
<dbReference type="FunFam" id="3.30.40.10:FF:000089">
    <property type="entry name" value="Histone-lysine N-methyltransferase"/>
    <property type="match status" value="1"/>
</dbReference>
<dbReference type="Gene3D" id="3.30.160.360">
    <property type="match status" value="2"/>
</dbReference>
<dbReference type="Gene3D" id="1.20.920.10">
    <property type="entry name" value="Bromodomain-like"/>
    <property type="match status" value="1"/>
</dbReference>
<dbReference type="Gene3D" id="2.170.270.10">
    <property type="entry name" value="SET domain"/>
    <property type="match status" value="1"/>
</dbReference>
<dbReference type="Gene3D" id="3.30.40.10">
    <property type="entry name" value="Zinc/RING finger domain, C3HC4 (zinc finger)"/>
    <property type="match status" value="3"/>
</dbReference>
<dbReference type="InterPro" id="IPR036427">
    <property type="entry name" value="Bromodomain-like_sf"/>
</dbReference>
<dbReference type="InterPro" id="IPR034732">
    <property type="entry name" value="EPHD"/>
</dbReference>
<dbReference type="InterPro" id="IPR003889">
    <property type="entry name" value="FYrich_C"/>
</dbReference>
<dbReference type="InterPro" id="IPR003888">
    <property type="entry name" value="FYrich_N"/>
</dbReference>
<dbReference type="InterPro" id="IPR047219">
    <property type="entry name" value="KMT2A_2B_SET"/>
</dbReference>
<dbReference type="InterPro" id="IPR041959">
    <property type="entry name" value="KMT2B_ePHD"/>
</dbReference>
<dbReference type="InterPro" id="IPR016569">
    <property type="entry name" value="MeTrfase_trithorax"/>
</dbReference>
<dbReference type="InterPro" id="IPR003616">
    <property type="entry name" value="Post-SET_dom"/>
</dbReference>
<dbReference type="InterPro" id="IPR001214">
    <property type="entry name" value="SET_dom"/>
</dbReference>
<dbReference type="InterPro" id="IPR046341">
    <property type="entry name" value="SET_dom_sf"/>
</dbReference>
<dbReference type="InterPro" id="IPR002857">
    <property type="entry name" value="Znf_CXXC"/>
</dbReference>
<dbReference type="InterPro" id="IPR011011">
    <property type="entry name" value="Znf_FYVE_PHD"/>
</dbReference>
<dbReference type="InterPro" id="IPR001965">
    <property type="entry name" value="Znf_PHD"/>
</dbReference>
<dbReference type="InterPro" id="IPR019787">
    <property type="entry name" value="Znf_PHD-finger"/>
</dbReference>
<dbReference type="InterPro" id="IPR013083">
    <property type="entry name" value="Znf_RING/FYVE/PHD"/>
</dbReference>
<dbReference type="PANTHER" id="PTHR45838:SF3">
    <property type="entry name" value="HISTONE-LYSINE N-METHYLTRANSFERASE 2B"/>
    <property type="match status" value="1"/>
</dbReference>
<dbReference type="PANTHER" id="PTHR45838">
    <property type="entry name" value="HISTONE-LYSINE-N-METHYLTRANSFERASE 2 KMT2 FAMILY MEMBER"/>
    <property type="match status" value="1"/>
</dbReference>
<dbReference type="Pfam" id="PF05965">
    <property type="entry name" value="FYRC"/>
    <property type="match status" value="1"/>
</dbReference>
<dbReference type="Pfam" id="PF05964">
    <property type="entry name" value="FYRN"/>
    <property type="match status" value="1"/>
</dbReference>
<dbReference type="Pfam" id="PF00628">
    <property type="entry name" value="PHD"/>
    <property type="match status" value="2"/>
</dbReference>
<dbReference type="Pfam" id="PF00856">
    <property type="entry name" value="SET"/>
    <property type="match status" value="1"/>
</dbReference>
<dbReference type="Pfam" id="PF02008">
    <property type="entry name" value="zf-CXXC"/>
    <property type="match status" value="1"/>
</dbReference>
<dbReference type="Pfam" id="PF13771">
    <property type="entry name" value="zf-HC5HC2H"/>
    <property type="match status" value="1"/>
</dbReference>
<dbReference type="PIRSF" id="PIRSF010354">
    <property type="entry name" value="Methyltransferase_trithorax"/>
    <property type="match status" value="1"/>
</dbReference>
<dbReference type="SMART" id="SM00542">
    <property type="entry name" value="FYRC"/>
    <property type="match status" value="1"/>
</dbReference>
<dbReference type="SMART" id="SM00541">
    <property type="entry name" value="FYRN"/>
    <property type="match status" value="1"/>
</dbReference>
<dbReference type="SMART" id="SM00249">
    <property type="entry name" value="PHD"/>
    <property type="match status" value="4"/>
</dbReference>
<dbReference type="SMART" id="SM00508">
    <property type="entry name" value="PostSET"/>
    <property type="match status" value="1"/>
</dbReference>
<dbReference type="SMART" id="SM00317">
    <property type="entry name" value="SET"/>
    <property type="match status" value="1"/>
</dbReference>
<dbReference type="SUPFAM" id="SSF57903">
    <property type="entry name" value="FYVE/PHD zinc finger"/>
    <property type="match status" value="2"/>
</dbReference>
<dbReference type="SUPFAM" id="SSF82199">
    <property type="entry name" value="SET domain"/>
    <property type="match status" value="1"/>
</dbReference>
<dbReference type="PROSITE" id="PS50014">
    <property type="entry name" value="BROMODOMAIN_2"/>
    <property type="match status" value="1"/>
</dbReference>
<dbReference type="PROSITE" id="PS51805">
    <property type="entry name" value="EPHD"/>
    <property type="match status" value="1"/>
</dbReference>
<dbReference type="PROSITE" id="PS51543">
    <property type="entry name" value="FYRC"/>
    <property type="match status" value="1"/>
</dbReference>
<dbReference type="PROSITE" id="PS51542">
    <property type="entry name" value="FYRN"/>
    <property type="match status" value="1"/>
</dbReference>
<dbReference type="PROSITE" id="PS50868">
    <property type="entry name" value="POST_SET"/>
    <property type="match status" value="1"/>
</dbReference>
<dbReference type="PROSITE" id="PS50280">
    <property type="entry name" value="SET"/>
    <property type="match status" value="1"/>
</dbReference>
<dbReference type="PROSITE" id="PS51058">
    <property type="entry name" value="ZF_CXXC"/>
    <property type="match status" value="1"/>
</dbReference>
<dbReference type="PROSITE" id="PS01359">
    <property type="entry name" value="ZF_PHD_1"/>
    <property type="match status" value="3"/>
</dbReference>
<dbReference type="PROSITE" id="PS50016">
    <property type="entry name" value="ZF_PHD_2"/>
    <property type="match status" value="3"/>
</dbReference>